<feature type="chain" id="PRO_0000123624" description="Isoprenyl transferase">
    <location>
        <begin position="1"/>
        <end position="234"/>
    </location>
</feature>
<feature type="active site" evidence="1">
    <location>
        <position position="13"/>
    </location>
</feature>
<feature type="active site" description="Proton acceptor" evidence="1">
    <location>
        <position position="61"/>
    </location>
</feature>
<feature type="binding site" evidence="1">
    <location>
        <position position="13"/>
    </location>
    <ligand>
        <name>Mg(2+)</name>
        <dbReference type="ChEBI" id="CHEBI:18420"/>
    </ligand>
</feature>
<feature type="binding site" evidence="1">
    <location>
        <begin position="14"/>
        <end position="17"/>
    </location>
    <ligand>
        <name>substrate</name>
    </ligand>
</feature>
<feature type="binding site" evidence="1">
    <location>
        <position position="18"/>
    </location>
    <ligand>
        <name>substrate</name>
    </ligand>
</feature>
<feature type="binding site" evidence="1">
    <location>
        <position position="26"/>
    </location>
    <ligand>
        <name>substrate</name>
    </ligand>
</feature>
<feature type="binding site" evidence="1">
    <location>
        <position position="30"/>
    </location>
    <ligand>
        <name>substrate</name>
    </ligand>
</feature>
<feature type="binding site" evidence="1">
    <location>
        <begin position="58"/>
        <end position="60"/>
    </location>
    <ligand>
        <name>substrate</name>
    </ligand>
</feature>
<feature type="binding site" evidence="1">
    <location>
        <position position="62"/>
    </location>
    <ligand>
        <name>substrate</name>
    </ligand>
</feature>
<feature type="binding site" evidence="1">
    <location>
        <position position="64"/>
    </location>
    <ligand>
        <name>substrate</name>
    </ligand>
</feature>
<feature type="binding site" evidence="1">
    <location>
        <position position="180"/>
    </location>
    <ligand>
        <name>substrate</name>
    </ligand>
</feature>
<feature type="binding site" evidence="1">
    <location>
        <begin position="186"/>
        <end position="188"/>
    </location>
    <ligand>
        <name>substrate</name>
    </ligand>
</feature>
<feature type="binding site" evidence="1">
    <location>
        <position position="199"/>
    </location>
    <ligand>
        <name>Mg(2+)</name>
        <dbReference type="ChEBI" id="CHEBI:18420"/>
    </ligand>
</feature>
<accession>Q9ZK05</accession>
<proteinExistence type="inferred from homology"/>
<sequence>MDSTLKHLAIIMDGNGRWAKLKNKARAYGHKKGVKTLKDITIWCANHKLECLTLYAFSTENWKRPKSEVDFLMKMLKKYLKDERSTYLDNNIRFRAIGDLEGFSKELRDTILRLENDTRYFKDFTQVLALNYGSKNELSRAFKSLLENPPNHINNIESLENEISHRLDTHDLPEVDLLLRTGGEMRLSNFLLWQSSYAELFFTPILWPDFTPKDLENIISDFYKRVRKFGELKC</sequence>
<gene>
    <name evidence="1" type="primary">uppS</name>
    <name type="ordered locus">jhp_1142</name>
</gene>
<organism>
    <name type="scientific">Helicobacter pylori (strain J99 / ATCC 700824)</name>
    <name type="common">Campylobacter pylori J99</name>
    <dbReference type="NCBI Taxonomy" id="85963"/>
    <lineage>
        <taxon>Bacteria</taxon>
        <taxon>Pseudomonadati</taxon>
        <taxon>Campylobacterota</taxon>
        <taxon>Epsilonproteobacteria</taxon>
        <taxon>Campylobacterales</taxon>
        <taxon>Helicobacteraceae</taxon>
        <taxon>Helicobacter</taxon>
    </lineage>
</organism>
<dbReference type="EC" id="2.5.1.-" evidence="1"/>
<dbReference type="EMBL" id="AE001439">
    <property type="protein sequence ID" value="AAD06728.1"/>
    <property type="molecule type" value="Genomic_DNA"/>
</dbReference>
<dbReference type="PIR" id="H71842">
    <property type="entry name" value="H71842"/>
</dbReference>
<dbReference type="RefSeq" id="WP_000378606.1">
    <property type="nucleotide sequence ID" value="NC_000921.1"/>
</dbReference>
<dbReference type="SMR" id="Q9ZK05"/>
<dbReference type="KEGG" id="hpj:jhp_1142"/>
<dbReference type="eggNOG" id="COG0020">
    <property type="taxonomic scope" value="Bacteria"/>
</dbReference>
<dbReference type="Proteomes" id="UP000000804">
    <property type="component" value="Chromosome"/>
</dbReference>
<dbReference type="GO" id="GO:0005829">
    <property type="term" value="C:cytosol"/>
    <property type="evidence" value="ECO:0007669"/>
    <property type="project" value="TreeGrafter"/>
</dbReference>
<dbReference type="GO" id="GO:0008834">
    <property type="term" value="F:ditrans,polycis-undecaprenyl-diphosphate synthase [(2E,6E)-farnesyl-diphosphate specific] activity"/>
    <property type="evidence" value="ECO:0007669"/>
    <property type="project" value="TreeGrafter"/>
</dbReference>
<dbReference type="GO" id="GO:0000287">
    <property type="term" value="F:magnesium ion binding"/>
    <property type="evidence" value="ECO:0007669"/>
    <property type="project" value="UniProtKB-UniRule"/>
</dbReference>
<dbReference type="GO" id="GO:0016094">
    <property type="term" value="P:polyprenol biosynthetic process"/>
    <property type="evidence" value="ECO:0007669"/>
    <property type="project" value="TreeGrafter"/>
</dbReference>
<dbReference type="CDD" id="cd00475">
    <property type="entry name" value="Cis_IPPS"/>
    <property type="match status" value="1"/>
</dbReference>
<dbReference type="FunFam" id="3.40.1180.10:FF:000003">
    <property type="entry name" value="Isoprenyl transferase 2"/>
    <property type="match status" value="1"/>
</dbReference>
<dbReference type="Gene3D" id="3.40.1180.10">
    <property type="entry name" value="Decaprenyl diphosphate synthase-like"/>
    <property type="match status" value="1"/>
</dbReference>
<dbReference type="HAMAP" id="MF_01139">
    <property type="entry name" value="ISPT"/>
    <property type="match status" value="1"/>
</dbReference>
<dbReference type="InterPro" id="IPR001441">
    <property type="entry name" value="UPP_synth-like"/>
</dbReference>
<dbReference type="InterPro" id="IPR018520">
    <property type="entry name" value="UPP_synth-like_CS"/>
</dbReference>
<dbReference type="InterPro" id="IPR036424">
    <property type="entry name" value="UPP_synth-like_sf"/>
</dbReference>
<dbReference type="NCBIfam" id="NF011407">
    <property type="entry name" value="PRK14833.1"/>
    <property type="match status" value="1"/>
</dbReference>
<dbReference type="NCBIfam" id="TIGR00055">
    <property type="entry name" value="uppS"/>
    <property type="match status" value="1"/>
</dbReference>
<dbReference type="PANTHER" id="PTHR10291:SF0">
    <property type="entry name" value="DEHYDRODOLICHYL DIPHOSPHATE SYNTHASE 2"/>
    <property type="match status" value="1"/>
</dbReference>
<dbReference type="PANTHER" id="PTHR10291">
    <property type="entry name" value="DEHYDRODOLICHYL DIPHOSPHATE SYNTHASE FAMILY MEMBER"/>
    <property type="match status" value="1"/>
</dbReference>
<dbReference type="Pfam" id="PF01255">
    <property type="entry name" value="Prenyltransf"/>
    <property type="match status" value="1"/>
</dbReference>
<dbReference type="SUPFAM" id="SSF64005">
    <property type="entry name" value="Undecaprenyl diphosphate synthase"/>
    <property type="match status" value="1"/>
</dbReference>
<dbReference type="PROSITE" id="PS01066">
    <property type="entry name" value="UPP_SYNTHASE"/>
    <property type="match status" value="1"/>
</dbReference>
<reference key="1">
    <citation type="journal article" date="1999" name="Nature">
        <title>Genomic sequence comparison of two unrelated isolates of the human gastric pathogen Helicobacter pylori.</title>
        <authorList>
            <person name="Alm R.A."/>
            <person name="Ling L.-S.L."/>
            <person name="Moir D.T."/>
            <person name="King B.L."/>
            <person name="Brown E.D."/>
            <person name="Doig P.C."/>
            <person name="Smith D.R."/>
            <person name="Noonan B."/>
            <person name="Guild B.C."/>
            <person name="deJonge B.L."/>
            <person name="Carmel G."/>
            <person name="Tummino P.J."/>
            <person name="Caruso A."/>
            <person name="Uria-Nickelsen M."/>
            <person name="Mills D.M."/>
            <person name="Ives C."/>
            <person name="Gibson R."/>
            <person name="Merberg D."/>
            <person name="Mills S.D."/>
            <person name="Jiang Q."/>
            <person name="Taylor D.E."/>
            <person name="Vovis G.F."/>
            <person name="Trust T.J."/>
        </authorList>
    </citation>
    <scope>NUCLEOTIDE SEQUENCE [LARGE SCALE GENOMIC DNA]</scope>
    <source>
        <strain>J99 / ATCC 700824</strain>
    </source>
</reference>
<protein>
    <recommendedName>
        <fullName evidence="1">Isoprenyl transferase</fullName>
        <ecNumber evidence="1">2.5.1.-</ecNumber>
    </recommendedName>
</protein>
<name>ISPT_HELPJ</name>
<comment type="function">
    <text evidence="1">Catalyzes the condensation of isopentenyl diphosphate (IPP) with allylic pyrophosphates generating different type of terpenoids.</text>
</comment>
<comment type="cofactor">
    <cofactor evidence="1">
        <name>Mg(2+)</name>
        <dbReference type="ChEBI" id="CHEBI:18420"/>
    </cofactor>
    <text evidence="1">Binds 2 magnesium ions per subunit.</text>
</comment>
<comment type="subunit">
    <text evidence="1">Homodimer.</text>
</comment>
<comment type="similarity">
    <text evidence="1">Belongs to the UPP synthase family.</text>
</comment>
<evidence type="ECO:0000255" key="1">
    <source>
        <dbReference type="HAMAP-Rule" id="MF_01139"/>
    </source>
</evidence>
<keyword id="KW-0460">Magnesium</keyword>
<keyword id="KW-0479">Metal-binding</keyword>
<keyword id="KW-0808">Transferase</keyword>